<feature type="chain" id="PRO_0000065385" description="Uncharacterized protein F59B10.4">
    <location>
        <begin position="1"/>
        <end position="264"/>
    </location>
</feature>
<feature type="transmembrane region" description="Helical" evidence="1">
    <location>
        <begin position="43"/>
        <end position="63"/>
    </location>
</feature>
<feature type="transmembrane region" description="Helical" evidence="1">
    <location>
        <begin position="68"/>
        <end position="88"/>
    </location>
</feature>
<feature type="transmembrane region" description="Helical" evidence="1">
    <location>
        <begin position="96"/>
        <end position="116"/>
    </location>
</feature>
<feature type="transmembrane region" description="Helical" evidence="1">
    <location>
        <begin position="150"/>
        <end position="170"/>
    </location>
</feature>
<feature type="region of interest" description="Disordered" evidence="2">
    <location>
        <begin position="216"/>
        <end position="247"/>
    </location>
</feature>
<feature type="compositionally biased region" description="Low complexity" evidence="2">
    <location>
        <begin position="224"/>
        <end position="237"/>
    </location>
</feature>
<feature type="splice variant" id="VSP_041640" description="In isoform b." evidence="3">
    <original>MANYHLMVPNPSRNAQIPSEAQRPMYGESHPSLFANMNNKK</original>
    <variation>MIFLTYTPVIQQYDS</variation>
    <location>
        <begin position="1"/>
        <end position="41"/>
    </location>
</feature>
<name>YSR4_CAEEL</name>
<gene>
    <name type="ORF">F59B10.4</name>
</gene>
<dbReference type="EMBL" id="Z48716">
    <property type="protein sequence ID" value="CAA88598.2"/>
    <property type="molecule type" value="Genomic_DNA"/>
</dbReference>
<dbReference type="EMBL" id="Z48716">
    <property type="protein sequence ID" value="CAH04739.1"/>
    <property type="molecule type" value="Genomic_DNA"/>
</dbReference>
<dbReference type="PIR" id="T22978">
    <property type="entry name" value="T22978"/>
</dbReference>
<dbReference type="RefSeq" id="NP_001022218.1">
    <molecule id="Q09952-1"/>
    <property type="nucleotide sequence ID" value="NM_001027047.5"/>
</dbReference>
<dbReference type="RefSeq" id="NP_001022219.1">
    <molecule id="Q09952-2"/>
    <property type="nucleotide sequence ID" value="NM_001027048.6"/>
</dbReference>
<dbReference type="FunCoup" id="Q09952">
    <property type="interactions" value="137"/>
</dbReference>
<dbReference type="PaxDb" id="6239-F59B10.4a"/>
<dbReference type="EnsemblMetazoa" id="F59B10.4a.1">
    <molecule id="Q09952-1"/>
    <property type="protein sequence ID" value="F59B10.4a.1"/>
    <property type="gene ID" value="WBGene00010320"/>
</dbReference>
<dbReference type="EnsemblMetazoa" id="F59B10.4b.1">
    <molecule id="Q09952-2"/>
    <property type="protein sequence ID" value="F59B10.4b.1"/>
    <property type="gene ID" value="WBGene00010320"/>
</dbReference>
<dbReference type="GeneID" id="174616"/>
<dbReference type="KEGG" id="cel:CELE_F59B10.4"/>
<dbReference type="UCSC" id="F59B10.4b">
    <property type="organism name" value="c. elegans"/>
</dbReference>
<dbReference type="AGR" id="WB:WBGene00010320"/>
<dbReference type="CTD" id="174616"/>
<dbReference type="WormBase" id="F59B10.4a">
    <molecule id="Q09952-1"/>
    <property type="protein sequence ID" value="CE35885"/>
    <property type="gene ID" value="WBGene00010320"/>
</dbReference>
<dbReference type="WormBase" id="F59B10.4b">
    <molecule id="Q09952-2"/>
    <property type="protein sequence ID" value="CE36941"/>
    <property type="gene ID" value="WBGene00010320"/>
</dbReference>
<dbReference type="eggNOG" id="ENOG502TH1F">
    <property type="taxonomic scope" value="Eukaryota"/>
</dbReference>
<dbReference type="HOGENOM" id="CLU_070412_0_0_1"/>
<dbReference type="InParanoid" id="Q09952"/>
<dbReference type="OMA" id="KICCPAV"/>
<dbReference type="OrthoDB" id="5826602at2759"/>
<dbReference type="PRO" id="PR:Q09952"/>
<dbReference type="Proteomes" id="UP000001940">
    <property type="component" value="Chromosome II"/>
</dbReference>
<dbReference type="Bgee" id="WBGene00010320">
    <property type="expression patterns" value="Expressed in larva and 2 other cell types or tissues"/>
</dbReference>
<dbReference type="GO" id="GO:0016020">
    <property type="term" value="C:membrane"/>
    <property type="evidence" value="ECO:0007669"/>
    <property type="project" value="UniProtKB-SubCell"/>
</dbReference>
<protein>
    <recommendedName>
        <fullName>Uncharacterized protein F59B10.4</fullName>
    </recommendedName>
</protein>
<keyword id="KW-0025">Alternative splicing</keyword>
<keyword id="KW-0472">Membrane</keyword>
<keyword id="KW-1185">Reference proteome</keyword>
<keyword id="KW-0812">Transmembrane</keyword>
<keyword id="KW-1133">Transmembrane helix</keyword>
<accession>Q09952</accession>
<accession>Q6BEV1</accession>
<comment type="subcellular location">
    <subcellularLocation>
        <location evidence="3">Membrane</location>
        <topology evidence="3">Multi-pass membrane protein</topology>
    </subcellularLocation>
</comment>
<comment type="alternative products">
    <event type="alternative splicing"/>
    <isoform>
        <id>Q09952-1</id>
        <name>a</name>
        <sequence type="displayed"/>
    </isoform>
    <isoform>
        <id>Q09952-2</id>
        <name>b</name>
        <sequence type="described" ref="VSP_041640"/>
    </isoform>
</comment>
<sequence length="264" mass="28986">MANYHLMVPNPSRNAQIPSEAQRPMYGESHPSLFANMNNKKVVVAAACTLPADSLFAVMLYLIYPDSFLPSTLFIVNFSLVLLALLGINSKVSSMILPALVWKCVLLLFLLFLGCISVDAYQVPATDLEEAHVSQPQEQPHRSMMVWKDLAAKYPMLPFIAVACTIVLAVEARVFFSAWQKICCPAVVNDESNLEKSPPSYNACVRATASEKDLPSYEDALKNSSQQPSTSSSSSSPPSRPPHSVYTIPDVKMHKSSMMTVISL</sequence>
<evidence type="ECO:0000255" key="1"/>
<evidence type="ECO:0000256" key="2">
    <source>
        <dbReference type="SAM" id="MobiDB-lite"/>
    </source>
</evidence>
<evidence type="ECO:0000305" key="3"/>
<reference key="1">
    <citation type="journal article" date="1998" name="Science">
        <title>Genome sequence of the nematode C. elegans: a platform for investigating biology.</title>
        <authorList>
            <consortium name="The C. elegans sequencing consortium"/>
        </authorList>
    </citation>
    <scope>NUCLEOTIDE SEQUENCE [LARGE SCALE GENOMIC DNA]</scope>
    <scope>ALTERNATIVE SPLICING</scope>
    <source>
        <strain>Bristol N2</strain>
    </source>
</reference>
<organism>
    <name type="scientific">Caenorhabditis elegans</name>
    <dbReference type="NCBI Taxonomy" id="6239"/>
    <lineage>
        <taxon>Eukaryota</taxon>
        <taxon>Metazoa</taxon>
        <taxon>Ecdysozoa</taxon>
        <taxon>Nematoda</taxon>
        <taxon>Chromadorea</taxon>
        <taxon>Rhabditida</taxon>
        <taxon>Rhabditina</taxon>
        <taxon>Rhabditomorpha</taxon>
        <taxon>Rhabditoidea</taxon>
        <taxon>Rhabditidae</taxon>
        <taxon>Peloderinae</taxon>
        <taxon>Caenorhabditis</taxon>
    </lineage>
</organism>
<proteinExistence type="predicted"/>